<accession>P37903</accession>
<accession>P76074</accession>
<accession>P76853</accession>
<gene>
    <name type="primary">uspF</name>
    <name type="synonym">ynaF</name>
    <name type="synonym">yzzL</name>
    <name type="ordered locus">b1376</name>
    <name type="ordered locus">JW1370</name>
</gene>
<comment type="subunit">
    <text evidence="1">Homodimer.</text>
</comment>
<comment type="similarity">
    <text evidence="1">Belongs to the universal stress protein A family.</text>
</comment>
<keyword id="KW-0903">Direct protein sequencing</keyword>
<keyword id="KW-1185">Reference proteome</keyword>
<proteinExistence type="evidence at protein level"/>
<evidence type="ECO:0000305" key="1"/>
<name>USPF_ECOLI</name>
<sequence length="144" mass="16017">MNRTILVPIDISDSELTQRVISHVEEEAKIDDAEVHFLTVIPSLPYYASLGLAYSAELPAMDDLKAEAKSQLEEIIKKFKLPTDRVHVHVEEGSPKDRILELAKKIPAHMIIIASHRPDITTYLLGSNAAAVVRHAECSVLVVR</sequence>
<dbReference type="EMBL" id="U00096">
    <property type="protein sequence ID" value="AAC74458.2"/>
    <property type="molecule type" value="Genomic_DNA"/>
</dbReference>
<dbReference type="EMBL" id="AP009048">
    <property type="protein sequence ID" value="BAA14980.1"/>
    <property type="molecule type" value="Genomic_DNA"/>
</dbReference>
<dbReference type="PIR" id="C64888">
    <property type="entry name" value="C64888"/>
</dbReference>
<dbReference type="RefSeq" id="NP_415894.4">
    <property type="nucleotide sequence ID" value="NC_000913.3"/>
</dbReference>
<dbReference type="RefSeq" id="WP_001300461.1">
    <property type="nucleotide sequence ID" value="NZ_SSZK01000012.1"/>
</dbReference>
<dbReference type="SMR" id="P37903"/>
<dbReference type="BioGRID" id="4262881">
    <property type="interactions" value="35"/>
</dbReference>
<dbReference type="DIP" id="DIP-12739N"/>
<dbReference type="FunCoup" id="P37903">
    <property type="interactions" value="118"/>
</dbReference>
<dbReference type="IntAct" id="P37903">
    <property type="interactions" value="19"/>
</dbReference>
<dbReference type="STRING" id="511145.b1376"/>
<dbReference type="jPOST" id="P37903"/>
<dbReference type="PaxDb" id="511145-b1376"/>
<dbReference type="EnsemblBacteria" id="AAC74458">
    <property type="protein sequence ID" value="AAC74458"/>
    <property type="gene ID" value="b1376"/>
</dbReference>
<dbReference type="GeneID" id="945948"/>
<dbReference type="KEGG" id="ecj:JW1370"/>
<dbReference type="KEGG" id="eco:b1376"/>
<dbReference type="KEGG" id="ecoc:C3026_08040"/>
<dbReference type="PATRIC" id="fig|1411691.4.peg.897"/>
<dbReference type="EchoBASE" id="EB2539"/>
<dbReference type="eggNOG" id="COG0589">
    <property type="taxonomic scope" value="Bacteria"/>
</dbReference>
<dbReference type="HOGENOM" id="CLU_049301_12_0_6"/>
<dbReference type="InParanoid" id="P37903"/>
<dbReference type="OMA" id="TSHRPAM"/>
<dbReference type="OrthoDB" id="9792500at2"/>
<dbReference type="PhylomeDB" id="P37903"/>
<dbReference type="BioCyc" id="EcoCyc:G6699-MONOMER"/>
<dbReference type="PRO" id="PR:P37903"/>
<dbReference type="Proteomes" id="UP000000625">
    <property type="component" value="Chromosome"/>
</dbReference>
<dbReference type="GO" id="GO:0005524">
    <property type="term" value="F:ATP binding"/>
    <property type="evidence" value="ECO:0000314"/>
    <property type="project" value="EcoliWiki"/>
</dbReference>
<dbReference type="GO" id="GO:0007155">
    <property type="term" value="P:cell adhesion"/>
    <property type="evidence" value="ECO:0000315"/>
    <property type="project" value="EcoCyc"/>
</dbReference>
<dbReference type="GO" id="GO:1902021">
    <property type="term" value="P:regulation of bacterial-type flagellum-dependent cell motility"/>
    <property type="evidence" value="ECO:0000315"/>
    <property type="project" value="EcoCyc"/>
</dbReference>
<dbReference type="CDD" id="cd00293">
    <property type="entry name" value="USP-like"/>
    <property type="match status" value="1"/>
</dbReference>
<dbReference type="FunFam" id="3.40.50.620:FF:000059">
    <property type="entry name" value="Universal stress protein F"/>
    <property type="match status" value="1"/>
</dbReference>
<dbReference type="Gene3D" id="3.40.50.620">
    <property type="entry name" value="HUPs"/>
    <property type="match status" value="1"/>
</dbReference>
<dbReference type="InterPro" id="IPR014729">
    <property type="entry name" value="Rossmann-like_a/b/a_fold"/>
</dbReference>
<dbReference type="InterPro" id="IPR006015">
    <property type="entry name" value="Universal_stress_UspA"/>
</dbReference>
<dbReference type="InterPro" id="IPR006016">
    <property type="entry name" value="UspA"/>
</dbReference>
<dbReference type="NCBIfam" id="NF011581">
    <property type="entry name" value="PRK15005.1"/>
    <property type="match status" value="1"/>
</dbReference>
<dbReference type="PANTHER" id="PTHR46268">
    <property type="entry name" value="STRESS RESPONSE PROTEIN NHAX"/>
    <property type="match status" value="1"/>
</dbReference>
<dbReference type="PANTHER" id="PTHR46268:SF18">
    <property type="entry name" value="UNIVERSAL STRESS PROTEIN F"/>
    <property type="match status" value="1"/>
</dbReference>
<dbReference type="Pfam" id="PF00582">
    <property type="entry name" value="Usp"/>
    <property type="match status" value="1"/>
</dbReference>
<dbReference type="PRINTS" id="PR01438">
    <property type="entry name" value="UNVRSLSTRESS"/>
</dbReference>
<dbReference type="SUPFAM" id="SSF52402">
    <property type="entry name" value="Adenine nucleotide alpha hydrolases-like"/>
    <property type="match status" value="1"/>
</dbReference>
<feature type="chain" id="PRO_0000147426" description="Universal stress protein F">
    <location>
        <begin position="1"/>
        <end position="144"/>
    </location>
</feature>
<protein>
    <recommendedName>
        <fullName>Universal stress protein F</fullName>
    </recommendedName>
</protein>
<reference key="1">
    <citation type="journal article" date="1996" name="DNA Res.">
        <title>A 570-kb DNA sequence of the Escherichia coli K-12 genome corresponding to the 28.0-40.1 min region on the linkage map.</title>
        <authorList>
            <person name="Aiba H."/>
            <person name="Baba T."/>
            <person name="Fujita K."/>
            <person name="Hayashi K."/>
            <person name="Inada T."/>
            <person name="Isono K."/>
            <person name="Itoh T."/>
            <person name="Kasai H."/>
            <person name="Kashimoto K."/>
            <person name="Kimura S."/>
            <person name="Kitakawa M."/>
            <person name="Kitagawa M."/>
            <person name="Makino K."/>
            <person name="Miki T."/>
            <person name="Mizobuchi K."/>
            <person name="Mori H."/>
            <person name="Mori T."/>
            <person name="Motomura K."/>
            <person name="Nakade S."/>
            <person name="Nakamura Y."/>
            <person name="Nashimoto H."/>
            <person name="Nishio Y."/>
            <person name="Oshima T."/>
            <person name="Saito N."/>
            <person name="Sampei G."/>
            <person name="Seki Y."/>
            <person name="Sivasundaram S."/>
            <person name="Tagami H."/>
            <person name="Takeda J."/>
            <person name="Takemoto K."/>
            <person name="Takeuchi Y."/>
            <person name="Wada C."/>
            <person name="Yamamoto Y."/>
            <person name="Horiuchi T."/>
        </authorList>
    </citation>
    <scope>NUCLEOTIDE SEQUENCE [LARGE SCALE GENOMIC DNA]</scope>
    <source>
        <strain>K12 / W3110 / ATCC 27325 / DSM 5911</strain>
    </source>
</reference>
<reference key="2">
    <citation type="journal article" date="1997" name="Science">
        <title>The complete genome sequence of Escherichia coli K-12.</title>
        <authorList>
            <person name="Blattner F.R."/>
            <person name="Plunkett G. III"/>
            <person name="Bloch C.A."/>
            <person name="Perna N.T."/>
            <person name="Burland V."/>
            <person name="Riley M."/>
            <person name="Collado-Vides J."/>
            <person name="Glasner J.D."/>
            <person name="Rode C.K."/>
            <person name="Mayhew G.F."/>
            <person name="Gregor J."/>
            <person name="Davis N.W."/>
            <person name="Kirkpatrick H.A."/>
            <person name="Goeden M.A."/>
            <person name="Rose D.J."/>
            <person name="Mau B."/>
            <person name="Shao Y."/>
        </authorList>
    </citation>
    <scope>NUCLEOTIDE SEQUENCE [LARGE SCALE GENOMIC DNA]</scope>
    <source>
        <strain>K12 / MG1655 / ATCC 47076</strain>
    </source>
</reference>
<reference key="3">
    <citation type="journal article" date="2006" name="Mol. Syst. Biol.">
        <title>Highly accurate genome sequences of Escherichia coli K-12 strains MG1655 and W3110.</title>
        <authorList>
            <person name="Hayashi K."/>
            <person name="Morooka N."/>
            <person name="Yamamoto Y."/>
            <person name="Fujita K."/>
            <person name="Isono K."/>
            <person name="Choi S."/>
            <person name="Ohtsubo E."/>
            <person name="Baba T."/>
            <person name="Wanner B.L."/>
            <person name="Mori H."/>
            <person name="Horiuchi T."/>
        </authorList>
    </citation>
    <scope>NUCLEOTIDE SEQUENCE [LARGE SCALE GENOMIC DNA]</scope>
    <source>
        <strain>K12 / W3110 / ATCC 27325 / DSM 5911</strain>
    </source>
</reference>
<reference key="4">
    <citation type="journal article" date="1997" name="Electrophoresis">
        <title>Comparing the predicted and observed properties of proteins encoded in the genome of Escherichia coli K-12.</title>
        <authorList>
            <person name="Link A.J."/>
            <person name="Robison K."/>
            <person name="Church G.M."/>
        </authorList>
    </citation>
    <scope>PROTEIN SEQUENCE OF 1-12</scope>
    <source>
        <strain>K12 / EMG2</strain>
    </source>
</reference>
<reference key="5">
    <citation type="submission" date="1994-09" db="UniProtKB">
        <authorList>
            <person name="Pasquali C."/>
            <person name="Sanchez J.-C."/>
            <person name="Ravier F."/>
            <person name="Golaz O."/>
            <person name="Hughes G.J."/>
            <person name="Frutiger S."/>
            <person name="Paquet N."/>
            <person name="Wilkins M."/>
            <person name="Appel R.D."/>
            <person name="Bairoch A."/>
            <person name="Hochstrasser D.F."/>
        </authorList>
    </citation>
    <scope>PROTEIN SEQUENCE OF 1-11</scope>
    <source>
        <strain>K12 / W3110 / ATCC 27325 / DSM 5911</strain>
    </source>
</reference>
<reference key="6">
    <citation type="journal article" date="2002" name="Mol. Microbiol.">
        <title>The universal stress protein paralogues of Escherichia coli are co-ordinately regulated and co-operate in the defence against DNA damage.</title>
        <authorList>
            <person name="Gustavsson N."/>
            <person name="Diez A."/>
            <person name="Nystroem T."/>
        </authorList>
    </citation>
    <scope>GENE NAME</scope>
    <source>
        <strain>K12 / MC4100 / ATCC 35695 / DSM 6574</strain>
    </source>
</reference>
<reference key="7">
    <citation type="journal article" date="2002" name="Protein Sci.">
        <title>Structural and nucleotide-binding properties of YajQ and YnaF, two Escherichia coli proteins of unknown function.</title>
        <authorList>
            <person name="Saveanu C."/>
            <person name="Miron S."/>
            <person name="Borza T."/>
            <person name="Craescu C.T."/>
            <person name="Labesse G."/>
            <person name="Gagyi C."/>
            <person name="Popescu A."/>
            <person name="Schaeffer F."/>
            <person name="Namane A."/>
            <person name="Laurent-Winter C."/>
            <person name="Barzu O."/>
            <person name="Gilles A.-M."/>
        </authorList>
    </citation>
    <scope>3D-STRUCTURE MODELING</scope>
</reference>
<organism>
    <name type="scientific">Escherichia coli (strain K12)</name>
    <dbReference type="NCBI Taxonomy" id="83333"/>
    <lineage>
        <taxon>Bacteria</taxon>
        <taxon>Pseudomonadati</taxon>
        <taxon>Pseudomonadota</taxon>
        <taxon>Gammaproteobacteria</taxon>
        <taxon>Enterobacterales</taxon>
        <taxon>Enterobacteriaceae</taxon>
        <taxon>Escherichia</taxon>
    </lineage>
</organism>